<organism>
    <name type="scientific">Cellvibrio japonicus (strain Ueda107)</name>
    <name type="common">Pseudomonas fluorescens subsp. cellulosa</name>
    <dbReference type="NCBI Taxonomy" id="498211"/>
    <lineage>
        <taxon>Bacteria</taxon>
        <taxon>Pseudomonadati</taxon>
        <taxon>Pseudomonadota</taxon>
        <taxon>Gammaproteobacteria</taxon>
        <taxon>Cellvibrionales</taxon>
        <taxon>Cellvibrionaceae</taxon>
        <taxon>Cellvibrio</taxon>
    </lineage>
</organism>
<reference key="1">
    <citation type="journal article" date="2008" name="J. Bacteriol.">
        <title>Insights into plant cell wall degradation from the genome sequence of the soil bacterium Cellvibrio japonicus.</title>
        <authorList>
            <person name="DeBoy R.T."/>
            <person name="Mongodin E.F."/>
            <person name="Fouts D.E."/>
            <person name="Tailford L.E."/>
            <person name="Khouri H."/>
            <person name="Emerson J.B."/>
            <person name="Mohamoud Y."/>
            <person name="Watkins K."/>
            <person name="Henrissat B."/>
            <person name="Gilbert H.J."/>
            <person name="Nelson K.E."/>
        </authorList>
    </citation>
    <scope>NUCLEOTIDE SEQUENCE [LARGE SCALE GENOMIC DNA]</scope>
    <source>
        <strain>Ueda107</strain>
    </source>
</reference>
<proteinExistence type="inferred from homology"/>
<gene>
    <name evidence="1" type="primary">rplX</name>
    <name type="ordered locus">CJA_0710</name>
</gene>
<comment type="function">
    <text evidence="1">One of two assembly initiator proteins, it binds directly to the 5'-end of the 23S rRNA, where it nucleates assembly of the 50S subunit.</text>
</comment>
<comment type="function">
    <text evidence="1">One of the proteins that surrounds the polypeptide exit tunnel on the outside of the subunit.</text>
</comment>
<comment type="subunit">
    <text evidence="1">Part of the 50S ribosomal subunit.</text>
</comment>
<comment type="similarity">
    <text evidence="1">Belongs to the universal ribosomal protein uL24 family.</text>
</comment>
<accession>B3PK48</accession>
<sequence length="105" mass="11469">MRKIKRDDEVIVIAGRDKGKRGKVVRVLAEDRLIVSGINMIKKHQKPNPQLGVAGGIVEKEAAIHASNVAIYNPATKKADRVGFKILENGNKVRVFKSNGEAVEA</sequence>
<evidence type="ECO:0000255" key="1">
    <source>
        <dbReference type="HAMAP-Rule" id="MF_01326"/>
    </source>
</evidence>
<evidence type="ECO:0000305" key="2"/>
<keyword id="KW-1185">Reference proteome</keyword>
<keyword id="KW-0687">Ribonucleoprotein</keyword>
<keyword id="KW-0689">Ribosomal protein</keyword>
<keyword id="KW-0694">RNA-binding</keyword>
<keyword id="KW-0699">rRNA-binding</keyword>
<name>RL24_CELJU</name>
<dbReference type="EMBL" id="CP000934">
    <property type="protein sequence ID" value="ACE85626.1"/>
    <property type="molecule type" value="Genomic_DNA"/>
</dbReference>
<dbReference type="RefSeq" id="WP_012486373.1">
    <property type="nucleotide sequence ID" value="NC_010995.1"/>
</dbReference>
<dbReference type="SMR" id="B3PK48"/>
<dbReference type="STRING" id="498211.CJA_0710"/>
<dbReference type="KEGG" id="cja:CJA_0710"/>
<dbReference type="eggNOG" id="COG0198">
    <property type="taxonomic scope" value="Bacteria"/>
</dbReference>
<dbReference type="HOGENOM" id="CLU_093315_2_2_6"/>
<dbReference type="OrthoDB" id="9807419at2"/>
<dbReference type="Proteomes" id="UP000001036">
    <property type="component" value="Chromosome"/>
</dbReference>
<dbReference type="GO" id="GO:1990904">
    <property type="term" value="C:ribonucleoprotein complex"/>
    <property type="evidence" value="ECO:0007669"/>
    <property type="project" value="UniProtKB-KW"/>
</dbReference>
<dbReference type="GO" id="GO:0005840">
    <property type="term" value="C:ribosome"/>
    <property type="evidence" value="ECO:0007669"/>
    <property type="project" value="UniProtKB-KW"/>
</dbReference>
<dbReference type="GO" id="GO:0019843">
    <property type="term" value="F:rRNA binding"/>
    <property type="evidence" value="ECO:0007669"/>
    <property type="project" value="UniProtKB-UniRule"/>
</dbReference>
<dbReference type="GO" id="GO:0003735">
    <property type="term" value="F:structural constituent of ribosome"/>
    <property type="evidence" value="ECO:0007669"/>
    <property type="project" value="InterPro"/>
</dbReference>
<dbReference type="GO" id="GO:0006412">
    <property type="term" value="P:translation"/>
    <property type="evidence" value="ECO:0007669"/>
    <property type="project" value="UniProtKB-UniRule"/>
</dbReference>
<dbReference type="CDD" id="cd06089">
    <property type="entry name" value="KOW_RPL26"/>
    <property type="match status" value="1"/>
</dbReference>
<dbReference type="FunFam" id="2.30.30.30:FF:000004">
    <property type="entry name" value="50S ribosomal protein L24"/>
    <property type="match status" value="1"/>
</dbReference>
<dbReference type="Gene3D" id="2.30.30.30">
    <property type="match status" value="1"/>
</dbReference>
<dbReference type="HAMAP" id="MF_01326_B">
    <property type="entry name" value="Ribosomal_uL24_B"/>
    <property type="match status" value="1"/>
</dbReference>
<dbReference type="InterPro" id="IPR005824">
    <property type="entry name" value="KOW"/>
</dbReference>
<dbReference type="InterPro" id="IPR014722">
    <property type="entry name" value="Rib_uL2_dom2"/>
</dbReference>
<dbReference type="InterPro" id="IPR003256">
    <property type="entry name" value="Ribosomal_uL24"/>
</dbReference>
<dbReference type="InterPro" id="IPR005825">
    <property type="entry name" value="Ribosomal_uL24_CS"/>
</dbReference>
<dbReference type="InterPro" id="IPR041988">
    <property type="entry name" value="Ribosomal_uL24_KOW"/>
</dbReference>
<dbReference type="InterPro" id="IPR008991">
    <property type="entry name" value="Translation_prot_SH3-like_sf"/>
</dbReference>
<dbReference type="NCBIfam" id="TIGR01079">
    <property type="entry name" value="rplX_bact"/>
    <property type="match status" value="1"/>
</dbReference>
<dbReference type="PANTHER" id="PTHR12903">
    <property type="entry name" value="MITOCHONDRIAL RIBOSOMAL PROTEIN L24"/>
    <property type="match status" value="1"/>
</dbReference>
<dbReference type="Pfam" id="PF00467">
    <property type="entry name" value="KOW"/>
    <property type="match status" value="1"/>
</dbReference>
<dbReference type="Pfam" id="PF17136">
    <property type="entry name" value="ribosomal_L24"/>
    <property type="match status" value="1"/>
</dbReference>
<dbReference type="SMART" id="SM00739">
    <property type="entry name" value="KOW"/>
    <property type="match status" value="1"/>
</dbReference>
<dbReference type="SUPFAM" id="SSF50104">
    <property type="entry name" value="Translation proteins SH3-like domain"/>
    <property type="match status" value="1"/>
</dbReference>
<dbReference type="PROSITE" id="PS01108">
    <property type="entry name" value="RIBOSOMAL_L24"/>
    <property type="match status" value="1"/>
</dbReference>
<protein>
    <recommendedName>
        <fullName evidence="1">Large ribosomal subunit protein uL24</fullName>
    </recommendedName>
    <alternativeName>
        <fullName evidence="2">50S ribosomal protein L24</fullName>
    </alternativeName>
</protein>
<feature type="chain" id="PRO_1000141980" description="Large ribosomal subunit protein uL24">
    <location>
        <begin position="1"/>
        <end position="105"/>
    </location>
</feature>